<gene>
    <name evidence="1" type="primary">rpmE</name>
    <name type="ordered locus">FTL_1303</name>
</gene>
<dbReference type="EMBL" id="AM233362">
    <property type="protein sequence ID" value="CAJ79742.1"/>
    <property type="status" value="ALT_INIT"/>
    <property type="molecule type" value="Genomic_DNA"/>
</dbReference>
<dbReference type="RefSeq" id="WP_010032364.1">
    <property type="nucleotide sequence ID" value="NZ_CP009694.1"/>
</dbReference>
<dbReference type="SMR" id="Q2A2S8"/>
<dbReference type="KEGG" id="ftl:FTL_1303"/>
<dbReference type="Proteomes" id="UP000001944">
    <property type="component" value="Chromosome"/>
</dbReference>
<dbReference type="GO" id="GO:1990904">
    <property type="term" value="C:ribonucleoprotein complex"/>
    <property type="evidence" value="ECO:0007669"/>
    <property type="project" value="UniProtKB-KW"/>
</dbReference>
<dbReference type="GO" id="GO:0005840">
    <property type="term" value="C:ribosome"/>
    <property type="evidence" value="ECO:0007669"/>
    <property type="project" value="UniProtKB-KW"/>
</dbReference>
<dbReference type="GO" id="GO:0046872">
    <property type="term" value="F:metal ion binding"/>
    <property type="evidence" value="ECO:0007669"/>
    <property type="project" value="UniProtKB-KW"/>
</dbReference>
<dbReference type="GO" id="GO:0019843">
    <property type="term" value="F:rRNA binding"/>
    <property type="evidence" value="ECO:0007669"/>
    <property type="project" value="UniProtKB-KW"/>
</dbReference>
<dbReference type="GO" id="GO:0003735">
    <property type="term" value="F:structural constituent of ribosome"/>
    <property type="evidence" value="ECO:0007669"/>
    <property type="project" value="InterPro"/>
</dbReference>
<dbReference type="GO" id="GO:0006412">
    <property type="term" value="P:translation"/>
    <property type="evidence" value="ECO:0007669"/>
    <property type="project" value="UniProtKB-UniRule"/>
</dbReference>
<dbReference type="Gene3D" id="4.10.830.30">
    <property type="entry name" value="Ribosomal protein L31"/>
    <property type="match status" value="1"/>
</dbReference>
<dbReference type="HAMAP" id="MF_00501">
    <property type="entry name" value="Ribosomal_bL31_1"/>
    <property type="match status" value="1"/>
</dbReference>
<dbReference type="InterPro" id="IPR034704">
    <property type="entry name" value="Ribosomal_bL28/bL31-like_sf"/>
</dbReference>
<dbReference type="InterPro" id="IPR002150">
    <property type="entry name" value="Ribosomal_bL31"/>
</dbReference>
<dbReference type="InterPro" id="IPR027491">
    <property type="entry name" value="Ribosomal_bL31_A"/>
</dbReference>
<dbReference type="InterPro" id="IPR042105">
    <property type="entry name" value="Ribosomal_bL31_sf"/>
</dbReference>
<dbReference type="NCBIfam" id="TIGR00105">
    <property type="entry name" value="L31"/>
    <property type="match status" value="1"/>
</dbReference>
<dbReference type="NCBIfam" id="NF000612">
    <property type="entry name" value="PRK00019.1"/>
    <property type="match status" value="1"/>
</dbReference>
<dbReference type="NCBIfam" id="NF001809">
    <property type="entry name" value="PRK00528.1"/>
    <property type="match status" value="1"/>
</dbReference>
<dbReference type="PANTHER" id="PTHR33280">
    <property type="entry name" value="50S RIBOSOMAL PROTEIN L31, CHLOROPLASTIC"/>
    <property type="match status" value="1"/>
</dbReference>
<dbReference type="PANTHER" id="PTHR33280:SF6">
    <property type="entry name" value="LARGE RIBOSOMAL SUBUNIT PROTEIN BL31A"/>
    <property type="match status" value="1"/>
</dbReference>
<dbReference type="Pfam" id="PF01197">
    <property type="entry name" value="Ribosomal_L31"/>
    <property type="match status" value="1"/>
</dbReference>
<dbReference type="PRINTS" id="PR01249">
    <property type="entry name" value="RIBOSOMALL31"/>
</dbReference>
<dbReference type="SUPFAM" id="SSF143800">
    <property type="entry name" value="L28p-like"/>
    <property type="match status" value="1"/>
</dbReference>
<dbReference type="PROSITE" id="PS01143">
    <property type="entry name" value="RIBOSOMAL_L31"/>
    <property type="match status" value="1"/>
</dbReference>
<keyword id="KW-0479">Metal-binding</keyword>
<keyword id="KW-1185">Reference proteome</keyword>
<keyword id="KW-0687">Ribonucleoprotein</keyword>
<keyword id="KW-0689">Ribosomal protein</keyword>
<keyword id="KW-0694">RNA-binding</keyword>
<keyword id="KW-0699">rRNA-binding</keyword>
<keyword id="KW-0862">Zinc</keyword>
<protein>
    <recommendedName>
        <fullName evidence="1">Large ribosomal subunit protein bL31</fullName>
    </recommendedName>
    <alternativeName>
        <fullName evidence="2">50S ribosomal protein L31</fullName>
    </alternativeName>
</protein>
<accession>Q2A2S8</accession>
<sequence>MRQEIHPKYTEVTVTCSCGNTFVTRSTAGKKEMNIDICSECHPFYTGKQRIVDTAGRVDKFKKRFGGMKKYN</sequence>
<proteinExistence type="inferred from homology"/>
<organism>
    <name type="scientific">Francisella tularensis subsp. holarctica (strain LVS)</name>
    <dbReference type="NCBI Taxonomy" id="376619"/>
    <lineage>
        <taxon>Bacteria</taxon>
        <taxon>Pseudomonadati</taxon>
        <taxon>Pseudomonadota</taxon>
        <taxon>Gammaproteobacteria</taxon>
        <taxon>Thiotrichales</taxon>
        <taxon>Francisellaceae</taxon>
        <taxon>Francisella</taxon>
    </lineage>
</organism>
<name>RL31_FRATH</name>
<evidence type="ECO:0000255" key="1">
    <source>
        <dbReference type="HAMAP-Rule" id="MF_00501"/>
    </source>
</evidence>
<evidence type="ECO:0000305" key="2"/>
<reference key="1">
    <citation type="submission" date="2006-03" db="EMBL/GenBank/DDBJ databases">
        <title>Complete genome sequence of Francisella tularensis LVS (Live Vaccine Strain).</title>
        <authorList>
            <person name="Chain P."/>
            <person name="Larimer F."/>
            <person name="Land M."/>
            <person name="Stilwagen S."/>
            <person name="Larsson P."/>
            <person name="Bearden S."/>
            <person name="Chu M."/>
            <person name="Oyston P."/>
            <person name="Forsman M."/>
            <person name="Andersson S."/>
            <person name="Lindler L."/>
            <person name="Titball R."/>
            <person name="Garcia E."/>
        </authorList>
    </citation>
    <scope>NUCLEOTIDE SEQUENCE [LARGE SCALE GENOMIC DNA]</scope>
    <source>
        <strain>LVS</strain>
    </source>
</reference>
<comment type="function">
    <text evidence="1">Binds the 23S rRNA.</text>
</comment>
<comment type="cofactor">
    <cofactor evidence="1">
        <name>Zn(2+)</name>
        <dbReference type="ChEBI" id="CHEBI:29105"/>
    </cofactor>
    <text evidence="1">Binds 1 zinc ion per subunit.</text>
</comment>
<comment type="subunit">
    <text evidence="1">Part of the 50S ribosomal subunit.</text>
</comment>
<comment type="similarity">
    <text evidence="1">Belongs to the bacterial ribosomal protein bL31 family. Type A subfamily.</text>
</comment>
<comment type="sequence caution" evidence="2">
    <conflict type="erroneous initiation">
        <sequence resource="EMBL-CDS" id="CAJ79742"/>
    </conflict>
</comment>
<feature type="chain" id="PRO_0000259187" description="Large ribosomal subunit protein bL31">
    <location>
        <begin position="1"/>
        <end position="72"/>
    </location>
</feature>
<feature type="binding site" evidence="1">
    <location>
        <position position="16"/>
    </location>
    <ligand>
        <name>Zn(2+)</name>
        <dbReference type="ChEBI" id="CHEBI:29105"/>
    </ligand>
</feature>
<feature type="binding site" evidence="1">
    <location>
        <position position="18"/>
    </location>
    <ligand>
        <name>Zn(2+)</name>
        <dbReference type="ChEBI" id="CHEBI:29105"/>
    </ligand>
</feature>
<feature type="binding site" evidence="1">
    <location>
        <position position="38"/>
    </location>
    <ligand>
        <name>Zn(2+)</name>
        <dbReference type="ChEBI" id="CHEBI:29105"/>
    </ligand>
</feature>
<feature type="binding site" evidence="1">
    <location>
        <position position="41"/>
    </location>
    <ligand>
        <name>Zn(2+)</name>
        <dbReference type="ChEBI" id="CHEBI:29105"/>
    </ligand>
</feature>